<accession>Q4QK65</accession>
<organism>
    <name type="scientific">Haemophilus influenzae (strain 86-028NP)</name>
    <dbReference type="NCBI Taxonomy" id="281310"/>
    <lineage>
        <taxon>Bacteria</taxon>
        <taxon>Pseudomonadati</taxon>
        <taxon>Pseudomonadota</taxon>
        <taxon>Gammaproteobacteria</taxon>
        <taxon>Pasteurellales</taxon>
        <taxon>Pasteurellaceae</taxon>
        <taxon>Haemophilus</taxon>
    </lineage>
</organism>
<dbReference type="EMBL" id="CP000057">
    <property type="protein sequence ID" value="AAX88582.1"/>
    <property type="molecule type" value="Genomic_DNA"/>
</dbReference>
<dbReference type="KEGG" id="hit:NTHI1811"/>
<dbReference type="HOGENOM" id="CLU_109769_2_0_6"/>
<dbReference type="Proteomes" id="UP000002525">
    <property type="component" value="Chromosome"/>
</dbReference>
<dbReference type="HAMAP" id="MF_00676">
    <property type="entry name" value="UPF0260"/>
    <property type="match status" value="1"/>
</dbReference>
<dbReference type="InterPro" id="IPR005358">
    <property type="entry name" value="Puta_zinc/iron-chelating_dom"/>
</dbReference>
<dbReference type="InterPro" id="IPR008228">
    <property type="entry name" value="UCP006173"/>
</dbReference>
<dbReference type="NCBIfam" id="NF003499">
    <property type="entry name" value="PRK05170.1-2"/>
    <property type="match status" value="1"/>
</dbReference>
<dbReference type="NCBIfam" id="NF003501">
    <property type="entry name" value="PRK05170.1-5"/>
    <property type="match status" value="1"/>
</dbReference>
<dbReference type="PANTHER" id="PTHR37421">
    <property type="entry name" value="UPF0260 PROTEIN YCGN"/>
    <property type="match status" value="1"/>
</dbReference>
<dbReference type="PANTHER" id="PTHR37421:SF1">
    <property type="entry name" value="UPF0260 PROTEIN YCGN"/>
    <property type="match status" value="1"/>
</dbReference>
<dbReference type="Pfam" id="PF03692">
    <property type="entry name" value="CxxCxxCC"/>
    <property type="match status" value="1"/>
</dbReference>
<dbReference type="PIRSF" id="PIRSF006173">
    <property type="entry name" value="UCP006173"/>
    <property type="match status" value="1"/>
</dbReference>
<name>Y1811_HAEI8</name>
<evidence type="ECO:0000255" key="1">
    <source>
        <dbReference type="HAMAP-Rule" id="MF_00676"/>
    </source>
</evidence>
<sequence length="154" mass="18179">MQSNMQLEPNFWQTKSLLEMTESEWEALCDGCGKCCYRKYIQGRSKRQKLYYTRIACNLLDVETGKCGNYSERFNIETDCTKLTKKNLPDFHWLPDTCAYRLLYEGKTLPEWHPLISGSPHSVKNADILIKNGIHERDVIDWFEFIIDEDHTFK</sequence>
<feature type="chain" id="PRO_1000044795" description="UPF0260 protein NTHI1811">
    <location>
        <begin position="1"/>
        <end position="154"/>
    </location>
</feature>
<gene>
    <name type="ordered locus">NTHI1811</name>
</gene>
<comment type="similarity">
    <text evidence="1">Belongs to the UPF0260 family.</text>
</comment>
<proteinExistence type="inferred from homology"/>
<reference key="1">
    <citation type="journal article" date="2005" name="J. Bacteriol.">
        <title>Genomic sequence of an otitis media isolate of nontypeable Haemophilus influenzae: comparative study with H. influenzae serotype d, strain KW20.</title>
        <authorList>
            <person name="Harrison A."/>
            <person name="Dyer D.W."/>
            <person name="Gillaspy A."/>
            <person name="Ray W.C."/>
            <person name="Mungur R."/>
            <person name="Carson M.B."/>
            <person name="Zhong H."/>
            <person name="Gipson J."/>
            <person name="Gipson M."/>
            <person name="Johnson L.S."/>
            <person name="Lewis L."/>
            <person name="Bakaletz L.O."/>
            <person name="Munson R.S. Jr."/>
        </authorList>
    </citation>
    <scope>NUCLEOTIDE SEQUENCE [LARGE SCALE GENOMIC DNA]</scope>
    <source>
        <strain>86-028NP</strain>
    </source>
</reference>
<protein>
    <recommendedName>
        <fullName evidence="1">UPF0260 protein NTHI1811</fullName>
    </recommendedName>
</protein>